<keyword id="KW-1003">Cell membrane</keyword>
<keyword id="KW-0472">Membrane</keyword>
<keyword id="KW-0479">Metal-binding</keyword>
<keyword id="KW-0500">Molybdenum</keyword>
<keyword id="KW-0732">Signal</keyword>
<keyword id="KW-0813">Transport</keyword>
<dbReference type="EMBL" id="AJ248283">
    <property type="protein sequence ID" value="CAB49074.1"/>
    <property type="molecule type" value="Genomic_DNA"/>
</dbReference>
<dbReference type="EMBL" id="HE613800">
    <property type="protein sequence ID" value="CCE69526.1"/>
    <property type="molecule type" value="Genomic_DNA"/>
</dbReference>
<dbReference type="PIR" id="C75203">
    <property type="entry name" value="C75203"/>
</dbReference>
<dbReference type="RefSeq" id="WP_010867274.1">
    <property type="nucleotide sequence ID" value="NC_000868.1"/>
</dbReference>
<dbReference type="SMR" id="Q9V2C4"/>
<dbReference type="STRING" id="272844.PAB0101"/>
<dbReference type="KEGG" id="pab:PAB0101"/>
<dbReference type="PATRIC" id="fig|272844.11.peg.163"/>
<dbReference type="eggNOG" id="arCOG00219">
    <property type="taxonomic scope" value="Archaea"/>
</dbReference>
<dbReference type="HOGENOM" id="CLU_055936_0_0_2"/>
<dbReference type="OrthoDB" id="7820at2157"/>
<dbReference type="PhylomeDB" id="Q9V2C4"/>
<dbReference type="Proteomes" id="UP000000810">
    <property type="component" value="Chromosome"/>
</dbReference>
<dbReference type="Proteomes" id="UP000009139">
    <property type="component" value="Chromosome"/>
</dbReference>
<dbReference type="GO" id="GO:0005886">
    <property type="term" value="C:plasma membrane"/>
    <property type="evidence" value="ECO:0007669"/>
    <property type="project" value="UniProtKB-SubCell"/>
</dbReference>
<dbReference type="GO" id="GO:0046872">
    <property type="term" value="F:metal ion binding"/>
    <property type="evidence" value="ECO:0007669"/>
    <property type="project" value="UniProtKB-KW"/>
</dbReference>
<dbReference type="GO" id="GO:0030973">
    <property type="term" value="F:molybdate ion binding"/>
    <property type="evidence" value="ECO:0007669"/>
    <property type="project" value="TreeGrafter"/>
</dbReference>
<dbReference type="GO" id="GO:1901359">
    <property type="term" value="F:tungstate binding"/>
    <property type="evidence" value="ECO:0007669"/>
    <property type="project" value="InterPro"/>
</dbReference>
<dbReference type="GO" id="GO:0015689">
    <property type="term" value="P:molybdate ion transport"/>
    <property type="evidence" value="ECO:0007669"/>
    <property type="project" value="TreeGrafter"/>
</dbReference>
<dbReference type="CDD" id="cd13540">
    <property type="entry name" value="PBP2_ModA_WtpA"/>
    <property type="match status" value="1"/>
</dbReference>
<dbReference type="FunFam" id="3.40.190.10:FF:000440">
    <property type="entry name" value="Uncharacterized solute-binding protein MA_0280"/>
    <property type="match status" value="1"/>
</dbReference>
<dbReference type="Gene3D" id="3.40.190.10">
    <property type="entry name" value="Periplasmic binding protein-like II"/>
    <property type="match status" value="2"/>
</dbReference>
<dbReference type="InterPro" id="IPR022498">
    <property type="entry name" value="ABC_trnspt_W-bd_WtpA"/>
</dbReference>
<dbReference type="InterPro" id="IPR050682">
    <property type="entry name" value="ModA/WtpA"/>
</dbReference>
<dbReference type="NCBIfam" id="NF003196">
    <property type="entry name" value="PRK04168.1"/>
    <property type="match status" value="1"/>
</dbReference>
<dbReference type="NCBIfam" id="TIGR03730">
    <property type="entry name" value="tungstate_WtpA"/>
    <property type="match status" value="1"/>
</dbReference>
<dbReference type="PANTHER" id="PTHR30632">
    <property type="entry name" value="MOLYBDATE-BINDING PERIPLASMIC PROTEIN"/>
    <property type="match status" value="1"/>
</dbReference>
<dbReference type="PANTHER" id="PTHR30632:SF16">
    <property type="entry name" value="MOLYBDATE_TUNGSTATE-BINDING PROTEIN WTPA"/>
    <property type="match status" value="1"/>
</dbReference>
<dbReference type="Pfam" id="PF13531">
    <property type="entry name" value="SBP_bac_11"/>
    <property type="match status" value="1"/>
</dbReference>
<dbReference type="SUPFAM" id="SSF53850">
    <property type="entry name" value="Periplasmic binding protein-like II"/>
    <property type="match status" value="1"/>
</dbReference>
<dbReference type="PROSITE" id="PS51257">
    <property type="entry name" value="PROKAR_LIPOPROTEIN"/>
    <property type="match status" value="1"/>
</dbReference>
<evidence type="ECO:0000250" key="1"/>
<evidence type="ECO:0000250" key="2">
    <source>
        <dbReference type="UniProtKB" id="O30142"/>
    </source>
</evidence>
<evidence type="ECO:0000255" key="3">
    <source>
        <dbReference type="PROSITE-ProRule" id="PRU00303"/>
    </source>
</evidence>
<evidence type="ECO:0000305" key="4"/>
<organism>
    <name type="scientific">Pyrococcus abyssi (strain GE5 / Orsay)</name>
    <dbReference type="NCBI Taxonomy" id="272844"/>
    <lineage>
        <taxon>Archaea</taxon>
        <taxon>Methanobacteriati</taxon>
        <taxon>Methanobacteriota</taxon>
        <taxon>Thermococci</taxon>
        <taxon>Thermococcales</taxon>
        <taxon>Thermococcaceae</taxon>
        <taxon>Pyrococcus</taxon>
    </lineage>
</organism>
<accession>Q9V2C4</accession>
<accession>G8ZFY5</accession>
<comment type="function">
    <text evidence="1">Part of the ABC transporter complex WtpABC involved in molybdate/tungstate import. Binds tungstate and molybdate (By similarity).</text>
</comment>
<comment type="subunit">
    <text evidence="1">The complex is composed of two ATP-binding proteins (WtpC), two transmembrane proteins (WtpB) and a solute-binding protein (WtpA).</text>
</comment>
<comment type="subcellular location">
    <subcellularLocation>
        <location evidence="3">Cell membrane</location>
        <topology evidence="1">Peripheral membrane protein</topology>
    </subcellularLocation>
</comment>
<comment type="similarity">
    <text evidence="4">Belongs to the bacterial solute-binding protein 1 family. WtpA subfamily.</text>
</comment>
<reference key="1">
    <citation type="journal article" date="2003" name="Mol. Microbiol.">
        <title>An integrated analysis of the genome of the hyperthermophilic archaeon Pyrococcus abyssi.</title>
        <authorList>
            <person name="Cohen G.N."/>
            <person name="Barbe V."/>
            <person name="Flament D."/>
            <person name="Galperin M."/>
            <person name="Heilig R."/>
            <person name="Lecompte O."/>
            <person name="Poch O."/>
            <person name="Prieur D."/>
            <person name="Querellou J."/>
            <person name="Ripp R."/>
            <person name="Thierry J.-C."/>
            <person name="Van der Oost J."/>
            <person name="Weissenbach J."/>
            <person name="Zivanovic Y."/>
            <person name="Forterre P."/>
        </authorList>
    </citation>
    <scope>NUCLEOTIDE SEQUENCE [LARGE SCALE GENOMIC DNA]</scope>
    <source>
        <strain>GE5 / Orsay</strain>
    </source>
</reference>
<reference key="2">
    <citation type="journal article" date="2012" name="Curr. Microbiol.">
        <title>Re-annotation of two hyperthermophilic archaea Pyrococcus abyssi GE5 and Pyrococcus furiosus DSM 3638.</title>
        <authorList>
            <person name="Gao J."/>
            <person name="Wang J."/>
        </authorList>
    </citation>
    <scope>GENOME REANNOTATION</scope>
    <source>
        <strain>GE5 / Orsay</strain>
    </source>
</reference>
<feature type="signal peptide" evidence="3">
    <location>
        <begin position="1"/>
        <end position="25"/>
    </location>
</feature>
<feature type="chain" id="PRO_0000159722" description="Molybdate/tungstate-binding protein WtpA">
    <location>
        <begin position="26"/>
        <end position="344"/>
    </location>
</feature>
<feature type="binding site" evidence="2">
    <location>
        <begin position="40"/>
        <end position="41"/>
    </location>
    <ligand>
        <name>molybdate</name>
        <dbReference type="ChEBI" id="CHEBI:36264"/>
    </ligand>
</feature>
<feature type="binding site" evidence="2">
    <location>
        <begin position="40"/>
        <end position="41"/>
    </location>
    <ligand>
        <name>tungstate</name>
        <dbReference type="ChEBI" id="CHEBI:46502"/>
    </ligand>
</feature>
<feature type="binding site" evidence="2">
    <location>
        <position position="74"/>
    </location>
    <ligand>
        <name>molybdate</name>
        <dbReference type="ChEBI" id="CHEBI:36264"/>
    </ligand>
</feature>
<feature type="binding site" evidence="2">
    <location>
        <position position="74"/>
    </location>
    <ligand>
        <name>tungstate</name>
        <dbReference type="ChEBI" id="CHEBI:46502"/>
    </ligand>
</feature>
<feature type="binding site" evidence="2">
    <location>
        <begin position="159"/>
        <end position="161"/>
    </location>
    <ligand>
        <name>molybdate</name>
        <dbReference type="ChEBI" id="CHEBI:36264"/>
    </ligand>
</feature>
<feature type="binding site" evidence="2">
    <location>
        <begin position="159"/>
        <end position="161"/>
    </location>
    <ligand>
        <name>tungstate</name>
        <dbReference type="ChEBI" id="CHEBI:46502"/>
    </ligand>
</feature>
<feature type="binding site" evidence="2">
    <location>
        <position position="217"/>
    </location>
    <ligand>
        <name>molybdate</name>
        <dbReference type="ChEBI" id="CHEBI:36264"/>
    </ligand>
</feature>
<feature type="binding site" evidence="2">
    <location>
        <position position="217"/>
    </location>
    <ligand>
        <name>tungstate</name>
        <dbReference type="ChEBI" id="CHEBI:46502"/>
    </ligand>
</feature>
<feature type="binding site" evidence="2">
    <location>
        <position position="235"/>
    </location>
    <ligand>
        <name>molybdate</name>
        <dbReference type="ChEBI" id="CHEBI:36264"/>
    </ligand>
</feature>
<feature type="binding site" evidence="2">
    <location>
        <position position="235"/>
    </location>
    <ligand>
        <name>tungstate</name>
        <dbReference type="ChEBI" id="CHEBI:46502"/>
    </ligand>
</feature>
<name>WTPA_PYRAB</name>
<gene>
    <name type="primary">wtpA</name>
    <name type="ordered locus">PYRAB01500</name>
    <name type="ORF">PAB0101</name>
</gene>
<proteinExistence type="inferred from homology"/>
<sequence length="344" mass="38608">MRLGLKIASLAIVFLILGCLGGGETETGQKTAKLIIFHAGSLSVPFSQLESEFAKYAEKELGIKVTFQDEASGSVKAVRKVTDLGKKADIVAVADYTLIPQLMVPNYTDFYVLFATNEIVIAFTEKSKYADEMLKNPDKWYEILAREDVSFGFSDPNQDPCGYRSVMVMKLADLYYGKPIFETLVEKTTNIYANGTHIYAPKEIIVKDKRVVIRPKETDLVGLVESGSLDYFFIYKSVAEQHNLKYITLPNEINLKDFSKADFYKKVSITLGSTGKTIYAKPIVYGITVLKDAPNRELALEFLKFLLSEKGKEIFRENHQDFLTPPVAFGNVPEEIKGLVEIKE</sequence>
<protein>
    <recommendedName>
        <fullName>Molybdate/tungstate-binding protein WtpA</fullName>
    </recommendedName>
</protein>